<reference key="1">
    <citation type="submission" date="2008-02" db="EMBL/GenBank/DDBJ databases">
        <title>Complete sequence of chromosome 1 of Burkholderia cenocepacia MC0-3.</title>
        <authorList>
            <person name="Copeland A."/>
            <person name="Lucas S."/>
            <person name="Lapidus A."/>
            <person name="Barry K."/>
            <person name="Bruce D."/>
            <person name="Goodwin L."/>
            <person name="Glavina del Rio T."/>
            <person name="Dalin E."/>
            <person name="Tice H."/>
            <person name="Pitluck S."/>
            <person name="Chain P."/>
            <person name="Malfatti S."/>
            <person name="Shin M."/>
            <person name="Vergez L."/>
            <person name="Schmutz J."/>
            <person name="Larimer F."/>
            <person name="Land M."/>
            <person name="Hauser L."/>
            <person name="Kyrpides N."/>
            <person name="Mikhailova N."/>
            <person name="Tiedje J."/>
            <person name="Richardson P."/>
        </authorList>
    </citation>
    <scope>NUCLEOTIDE SEQUENCE [LARGE SCALE GENOMIC DNA]</scope>
    <source>
        <strain>MC0-3</strain>
    </source>
</reference>
<name>APT_BURO0</name>
<feature type="chain" id="PRO_1000088957" description="Adenine phosphoribosyltransferase">
    <location>
        <begin position="1"/>
        <end position="188"/>
    </location>
</feature>
<proteinExistence type="inferred from homology"/>
<comment type="function">
    <text evidence="1">Catalyzes a salvage reaction resulting in the formation of AMP, that is energically less costly than de novo synthesis.</text>
</comment>
<comment type="catalytic activity">
    <reaction evidence="1">
        <text>AMP + diphosphate = 5-phospho-alpha-D-ribose 1-diphosphate + adenine</text>
        <dbReference type="Rhea" id="RHEA:16609"/>
        <dbReference type="ChEBI" id="CHEBI:16708"/>
        <dbReference type="ChEBI" id="CHEBI:33019"/>
        <dbReference type="ChEBI" id="CHEBI:58017"/>
        <dbReference type="ChEBI" id="CHEBI:456215"/>
        <dbReference type="EC" id="2.4.2.7"/>
    </reaction>
</comment>
<comment type="pathway">
    <text evidence="1">Purine metabolism; AMP biosynthesis via salvage pathway; AMP from adenine: step 1/1.</text>
</comment>
<comment type="subunit">
    <text evidence="1">Homodimer.</text>
</comment>
<comment type="subcellular location">
    <subcellularLocation>
        <location evidence="1">Cytoplasm</location>
    </subcellularLocation>
</comment>
<comment type="similarity">
    <text evidence="1">Belongs to the purine/pyrimidine phosphoribosyltransferase family.</text>
</comment>
<protein>
    <recommendedName>
        <fullName evidence="1">Adenine phosphoribosyltransferase</fullName>
        <shortName evidence="1">APRT</shortName>
        <ecNumber evidence="1">2.4.2.7</ecNumber>
    </recommendedName>
</protein>
<gene>
    <name evidence="1" type="primary">apt</name>
    <name type="ordered locus">Bcenmc03_2795</name>
</gene>
<accession>B1JYN1</accession>
<sequence>MPHSSPGAPLDPVAFIHSQIRTVPDWPQPGVQFRDITTLLQSPKALRILVDLFVERYVDAKLDYVAGLDARGFIIAPIVAYELSVGFVPIRKVGKLPYKTRSESYDLEYGSATVEIHEDACKPGDRVIIMDDLIATGGTMMAGRNLLQRLGAEVVEGAAIIDLPDLGGSTLLRNAGLPVYTVTEFAGH</sequence>
<organism>
    <name type="scientific">Burkholderia orbicola (strain MC0-3)</name>
    <dbReference type="NCBI Taxonomy" id="406425"/>
    <lineage>
        <taxon>Bacteria</taxon>
        <taxon>Pseudomonadati</taxon>
        <taxon>Pseudomonadota</taxon>
        <taxon>Betaproteobacteria</taxon>
        <taxon>Burkholderiales</taxon>
        <taxon>Burkholderiaceae</taxon>
        <taxon>Burkholderia</taxon>
        <taxon>Burkholderia cepacia complex</taxon>
        <taxon>Burkholderia orbicola</taxon>
    </lineage>
</organism>
<dbReference type="EC" id="2.4.2.7" evidence="1"/>
<dbReference type="EMBL" id="CP000958">
    <property type="protein sequence ID" value="ACA91954.1"/>
    <property type="molecule type" value="Genomic_DNA"/>
</dbReference>
<dbReference type="RefSeq" id="WP_012329235.1">
    <property type="nucleotide sequence ID" value="NC_010508.1"/>
</dbReference>
<dbReference type="SMR" id="B1JYN1"/>
<dbReference type="GeneID" id="83049579"/>
<dbReference type="KEGG" id="bcm:Bcenmc03_2795"/>
<dbReference type="HOGENOM" id="CLU_063339_3_0_4"/>
<dbReference type="UniPathway" id="UPA00588">
    <property type="reaction ID" value="UER00646"/>
</dbReference>
<dbReference type="Proteomes" id="UP000002169">
    <property type="component" value="Chromosome 1"/>
</dbReference>
<dbReference type="GO" id="GO:0005829">
    <property type="term" value="C:cytosol"/>
    <property type="evidence" value="ECO:0007669"/>
    <property type="project" value="TreeGrafter"/>
</dbReference>
<dbReference type="GO" id="GO:0003999">
    <property type="term" value="F:adenine phosphoribosyltransferase activity"/>
    <property type="evidence" value="ECO:0007669"/>
    <property type="project" value="UniProtKB-UniRule"/>
</dbReference>
<dbReference type="GO" id="GO:0006168">
    <property type="term" value="P:adenine salvage"/>
    <property type="evidence" value="ECO:0007669"/>
    <property type="project" value="InterPro"/>
</dbReference>
<dbReference type="GO" id="GO:0044209">
    <property type="term" value="P:AMP salvage"/>
    <property type="evidence" value="ECO:0007669"/>
    <property type="project" value="UniProtKB-UniRule"/>
</dbReference>
<dbReference type="GO" id="GO:0006166">
    <property type="term" value="P:purine ribonucleoside salvage"/>
    <property type="evidence" value="ECO:0007669"/>
    <property type="project" value="UniProtKB-KW"/>
</dbReference>
<dbReference type="CDD" id="cd06223">
    <property type="entry name" value="PRTases_typeI"/>
    <property type="match status" value="1"/>
</dbReference>
<dbReference type="FunFam" id="3.40.50.2020:FF:000021">
    <property type="entry name" value="Adenine phosphoribosyltransferase"/>
    <property type="match status" value="1"/>
</dbReference>
<dbReference type="Gene3D" id="3.40.50.2020">
    <property type="match status" value="1"/>
</dbReference>
<dbReference type="HAMAP" id="MF_00004">
    <property type="entry name" value="Aden_phosphoribosyltr"/>
    <property type="match status" value="1"/>
</dbReference>
<dbReference type="InterPro" id="IPR005764">
    <property type="entry name" value="Ade_phspho_trans"/>
</dbReference>
<dbReference type="InterPro" id="IPR050120">
    <property type="entry name" value="Adenine_PRTase"/>
</dbReference>
<dbReference type="InterPro" id="IPR000836">
    <property type="entry name" value="PRibTrfase_dom"/>
</dbReference>
<dbReference type="InterPro" id="IPR029057">
    <property type="entry name" value="PRTase-like"/>
</dbReference>
<dbReference type="NCBIfam" id="TIGR01090">
    <property type="entry name" value="apt"/>
    <property type="match status" value="1"/>
</dbReference>
<dbReference type="NCBIfam" id="NF002634">
    <property type="entry name" value="PRK02304.1-3"/>
    <property type="match status" value="1"/>
</dbReference>
<dbReference type="NCBIfam" id="NF002636">
    <property type="entry name" value="PRK02304.1-5"/>
    <property type="match status" value="1"/>
</dbReference>
<dbReference type="PANTHER" id="PTHR11776">
    <property type="entry name" value="ADENINE PHOSPHORIBOSYLTRANSFERASE"/>
    <property type="match status" value="1"/>
</dbReference>
<dbReference type="PANTHER" id="PTHR11776:SF7">
    <property type="entry name" value="PHOSPHORIBOSYLTRANSFERASE DOMAIN-CONTAINING PROTEIN"/>
    <property type="match status" value="1"/>
</dbReference>
<dbReference type="Pfam" id="PF00156">
    <property type="entry name" value="Pribosyltran"/>
    <property type="match status" value="1"/>
</dbReference>
<dbReference type="SUPFAM" id="SSF53271">
    <property type="entry name" value="PRTase-like"/>
    <property type="match status" value="1"/>
</dbReference>
<dbReference type="PROSITE" id="PS00103">
    <property type="entry name" value="PUR_PYR_PR_TRANSFER"/>
    <property type="match status" value="1"/>
</dbReference>
<keyword id="KW-0963">Cytoplasm</keyword>
<keyword id="KW-0328">Glycosyltransferase</keyword>
<keyword id="KW-0660">Purine salvage</keyword>
<keyword id="KW-0808">Transferase</keyword>
<evidence type="ECO:0000255" key="1">
    <source>
        <dbReference type="HAMAP-Rule" id="MF_00004"/>
    </source>
</evidence>